<proteinExistence type="inferred from homology"/>
<gene>
    <name evidence="1" type="primary">rpsR</name>
    <name type="ordered locus">Sputcn32_0755</name>
</gene>
<evidence type="ECO:0000255" key="1">
    <source>
        <dbReference type="HAMAP-Rule" id="MF_00270"/>
    </source>
</evidence>
<evidence type="ECO:0000305" key="2"/>
<sequence>MARYFRRRKFCRFTAEGVAEIDYKDIVTLKNYITESGKIVPSRITGTSAKYQRQLARAIKRARYLSLLPYTDLHQ</sequence>
<protein>
    <recommendedName>
        <fullName evidence="1">Small ribosomal subunit protein bS18</fullName>
    </recommendedName>
    <alternativeName>
        <fullName evidence="2">30S ribosomal protein S18</fullName>
    </alternativeName>
</protein>
<comment type="function">
    <text evidence="1">Binds as a heterodimer with protein bS6 to the central domain of the 16S rRNA, where it helps stabilize the platform of the 30S subunit.</text>
</comment>
<comment type="subunit">
    <text evidence="1">Part of the 30S ribosomal subunit. Forms a tight heterodimer with protein bS6.</text>
</comment>
<comment type="similarity">
    <text evidence="1">Belongs to the bacterial ribosomal protein bS18 family.</text>
</comment>
<organism>
    <name type="scientific">Shewanella putrefaciens (strain CN-32 / ATCC BAA-453)</name>
    <dbReference type="NCBI Taxonomy" id="319224"/>
    <lineage>
        <taxon>Bacteria</taxon>
        <taxon>Pseudomonadati</taxon>
        <taxon>Pseudomonadota</taxon>
        <taxon>Gammaproteobacteria</taxon>
        <taxon>Alteromonadales</taxon>
        <taxon>Shewanellaceae</taxon>
        <taxon>Shewanella</taxon>
    </lineage>
</organism>
<feature type="chain" id="PRO_1000003605" description="Small ribosomal subunit protein bS18">
    <location>
        <begin position="1"/>
        <end position="75"/>
    </location>
</feature>
<name>RS18_SHEPC</name>
<accession>A4Y3F2</accession>
<keyword id="KW-0687">Ribonucleoprotein</keyword>
<keyword id="KW-0689">Ribosomal protein</keyword>
<keyword id="KW-0694">RNA-binding</keyword>
<keyword id="KW-0699">rRNA-binding</keyword>
<reference key="1">
    <citation type="submission" date="2007-04" db="EMBL/GenBank/DDBJ databases">
        <title>Complete sequence of Shewanella putrefaciens CN-32.</title>
        <authorList>
            <consortium name="US DOE Joint Genome Institute"/>
            <person name="Copeland A."/>
            <person name="Lucas S."/>
            <person name="Lapidus A."/>
            <person name="Barry K."/>
            <person name="Detter J.C."/>
            <person name="Glavina del Rio T."/>
            <person name="Hammon N."/>
            <person name="Israni S."/>
            <person name="Dalin E."/>
            <person name="Tice H."/>
            <person name="Pitluck S."/>
            <person name="Chain P."/>
            <person name="Malfatti S."/>
            <person name="Shin M."/>
            <person name="Vergez L."/>
            <person name="Schmutz J."/>
            <person name="Larimer F."/>
            <person name="Land M."/>
            <person name="Hauser L."/>
            <person name="Kyrpides N."/>
            <person name="Mikhailova N."/>
            <person name="Romine M.F."/>
            <person name="Fredrickson J."/>
            <person name="Tiedje J."/>
            <person name="Richardson P."/>
        </authorList>
    </citation>
    <scope>NUCLEOTIDE SEQUENCE [LARGE SCALE GENOMIC DNA]</scope>
    <source>
        <strain>CN-32 / ATCC BAA-453</strain>
    </source>
</reference>
<dbReference type="EMBL" id="CP000681">
    <property type="protein sequence ID" value="ABP74485.1"/>
    <property type="molecule type" value="Genomic_DNA"/>
</dbReference>
<dbReference type="SMR" id="A4Y3F2"/>
<dbReference type="STRING" id="319224.Sputcn32_0755"/>
<dbReference type="KEGG" id="spc:Sputcn32_0755"/>
<dbReference type="eggNOG" id="COG0238">
    <property type="taxonomic scope" value="Bacteria"/>
</dbReference>
<dbReference type="HOGENOM" id="CLU_148710_2_3_6"/>
<dbReference type="GO" id="GO:0022627">
    <property type="term" value="C:cytosolic small ribosomal subunit"/>
    <property type="evidence" value="ECO:0007669"/>
    <property type="project" value="TreeGrafter"/>
</dbReference>
<dbReference type="GO" id="GO:0070181">
    <property type="term" value="F:small ribosomal subunit rRNA binding"/>
    <property type="evidence" value="ECO:0007669"/>
    <property type="project" value="TreeGrafter"/>
</dbReference>
<dbReference type="GO" id="GO:0003735">
    <property type="term" value="F:structural constituent of ribosome"/>
    <property type="evidence" value="ECO:0007669"/>
    <property type="project" value="InterPro"/>
</dbReference>
<dbReference type="GO" id="GO:0006412">
    <property type="term" value="P:translation"/>
    <property type="evidence" value="ECO:0007669"/>
    <property type="project" value="UniProtKB-UniRule"/>
</dbReference>
<dbReference type="FunFam" id="4.10.640.10:FF:000001">
    <property type="entry name" value="30S ribosomal protein S18"/>
    <property type="match status" value="1"/>
</dbReference>
<dbReference type="Gene3D" id="4.10.640.10">
    <property type="entry name" value="Ribosomal protein S18"/>
    <property type="match status" value="1"/>
</dbReference>
<dbReference type="HAMAP" id="MF_00270">
    <property type="entry name" value="Ribosomal_bS18"/>
    <property type="match status" value="1"/>
</dbReference>
<dbReference type="InterPro" id="IPR001648">
    <property type="entry name" value="Ribosomal_bS18"/>
</dbReference>
<dbReference type="InterPro" id="IPR018275">
    <property type="entry name" value="Ribosomal_bS18_CS"/>
</dbReference>
<dbReference type="InterPro" id="IPR036870">
    <property type="entry name" value="Ribosomal_bS18_sf"/>
</dbReference>
<dbReference type="NCBIfam" id="TIGR00165">
    <property type="entry name" value="S18"/>
    <property type="match status" value="1"/>
</dbReference>
<dbReference type="PANTHER" id="PTHR13479">
    <property type="entry name" value="30S RIBOSOMAL PROTEIN S18"/>
    <property type="match status" value="1"/>
</dbReference>
<dbReference type="PANTHER" id="PTHR13479:SF40">
    <property type="entry name" value="SMALL RIBOSOMAL SUBUNIT PROTEIN BS18M"/>
    <property type="match status" value="1"/>
</dbReference>
<dbReference type="Pfam" id="PF01084">
    <property type="entry name" value="Ribosomal_S18"/>
    <property type="match status" value="1"/>
</dbReference>
<dbReference type="PRINTS" id="PR00974">
    <property type="entry name" value="RIBOSOMALS18"/>
</dbReference>
<dbReference type="SUPFAM" id="SSF46911">
    <property type="entry name" value="Ribosomal protein S18"/>
    <property type="match status" value="1"/>
</dbReference>
<dbReference type="PROSITE" id="PS00057">
    <property type="entry name" value="RIBOSOMAL_S18"/>
    <property type="match status" value="1"/>
</dbReference>